<sequence length="152" mass="17339">MFRGLNPIAVDAKGRIAIPARYREPIESEADGILVVTIDTEERCLLIYTHPQWEQIEQKLENLPSYHPASRRIQRLLIGHATEVELDRSGRILIPPVLREYAGLGSMVMLVGQGKKFELWGKSQWETAREDWLAEELPKGDDLPPELRSLSL</sequence>
<comment type="subunit">
    <text evidence="1">Forms oligomers.</text>
</comment>
<comment type="subcellular location">
    <subcellularLocation>
        <location evidence="1">Cytoplasm</location>
        <location evidence="1">Nucleoid</location>
    </subcellularLocation>
</comment>
<comment type="similarity">
    <text evidence="1">Belongs to the MraZ family.</text>
</comment>
<comment type="sequence caution" evidence="3">
    <conflict type="erroneous initiation">
        <sequence resource="EMBL-CDS" id="ABS78242"/>
    </conflict>
</comment>
<name>MRAZ_COXBN</name>
<organism>
    <name type="scientific">Coxiella burnetii (strain Dugway 5J108-111)</name>
    <dbReference type="NCBI Taxonomy" id="434922"/>
    <lineage>
        <taxon>Bacteria</taxon>
        <taxon>Pseudomonadati</taxon>
        <taxon>Pseudomonadota</taxon>
        <taxon>Gammaproteobacteria</taxon>
        <taxon>Legionellales</taxon>
        <taxon>Coxiellaceae</taxon>
        <taxon>Coxiella</taxon>
    </lineage>
</organism>
<accession>A9KET3</accession>
<gene>
    <name evidence="1" type="primary">mraZ</name>
    <name type="ordered locus">CBUD_1992</name>
</gene>
<feature type="chain" id="PRO_1000084001" description="Transcriptional regulator MraZ">
    <location>
        <begin position="1"/>
        <end position="152"/>
    </location>
</feature>
<feature type="domain" description="SpoVT-AbrB 1" evidence="2">
    <location>
        <begin position="5"/>
        <end position="52"/>
    </location>
</feature>
<feature type="domain" description="SpoVT-AbrB 2" evidence="2">
    <location>
        <begin position="81"/>
        <end position="124"/>
    </location>
</feature>
<keyword id="KW-0963">Cytoplasm</keyword>
<keyword id="KW-0238">DNA-binding</keyword>
<keyword id="KW-0677">Repeat</keyword>
<keyword id="KW-0804">Transcription</keyword>
<keyword id="KW-0805">Transcription regulation</keyword>
<proteinExistence type="inferred from homology"/>
<protein>
    <recommendedName>
        <fullName>Transcriptional regulator MraZ</fullName>
    </recommendedName>
</protein>
<reference key="1">
    <citation type="journal article" date="2009" name="Infect. Immun.">
        <title>Comparative genomics reveal extensive transposon-mediated genomic plasticity and diversity among potential effector proteins within the genus Coxiella.</title>
        <authorList>
            <person name="Beare P.A."/>
            <person name="Unsworth N."/>
            <person name="Andoh M."/>
            <person name="Voth D.E."/>
            <person name="Omsland A."/>
            <person name="Gilk S.D."/>
            <person name="Williams K.P."/>
            <person name="Sobral B.W."/>
            <person name="Kupko J.J. III"/>
            <person name="Porcella S.F."/>
            <person name="Samuel J.E."/>
            <person name="Heinzen R.A."/>
        </authorList>
    </citation>
    <scope>NUCLEOTIDE SEQUENCE [LARGE SCALE GENOMIC DNA]</scope>
    <source>
        <strain>Dugway 5J108-111</strain>
    </source>
</reference>
<evidence type="ECO:0000255" key="1">
    <source>
        <dbReference type="HAMAP-Rule" id="MF_01008"/>
    </source>
</evidence>
<evidence type="ECO:0000255" key="2">
    <source>
        <dbReference type="PROSITE-ProRule" id="PRU01076"/>
    </source>
</evidence>
<evidence type="ECO:0000305" key="3"/>
<dbReference type="EMBL" id="CP000733">
    <property type="protein sequence ID" value="ABS78242.2"/>
    <property type="status" value="ALT_INIT"/>
    <property type="molecule type" value="Genomic_DNA"/>
</dbReference>
<dbReference type="SMR" id="A9KET3"/>
<dbReference type="KEGG" id="cbd:CBUD_1992"/>
<dbReference type="HOGENOM" id="CLU_107907_2_0_6"/>
<dbReference type="Proteomes" id="UP000008555">
    <property type="component" value="Chromosome"/>
</dbReference>
<dbReference type="GO" id="GO:0005737">
    <property type="term" value="C:cytoplasm"/>
    <property type="evidence" value="ECO:0007669"/>
    <property type="project" value="UniProtKB-UniRule"/>
</dbReference>
<dbReference type="GO" id="GO:0009295">
    <property type="term" value="C:nucleoid"/>
    <property type="evidence" value="ECO:0007669"/>
    <property type="project" value="UniProtKB-SubCell"/>
</dbReference>
<dbReference type="GO" id="GO:0003700">
    <property type="term" value="F:DNA-binding transcription factor activity"/>
    <property type="evidence" value="ECO:0007669"/>
    <property type="project" value="UniProtKB-UniRule"/>
</dbReference>
<dbReference type="GO" id="GO:0000976">
    <property type="term" value="F:transcription cis-regulatory region binding"/>
    <property type="evidence" value="ECO:0007669"/>
    <property type="project" value="TreeGrafter"/>
</dbReference>
<dbReference type="GO" id="GO:2000143">
    <property type="term" value="P:negative regulation of DNA-templated transcription initiation"/>
    <property type="evidence" value="ECO:0007669"/>
    <property type="project" value="TreeGrafter"/>
</dbReference>
<dbReference type="CDD" id="cd16321">
    <property type="entry name" value="MraZ_C"/>
    <property type="match status" value="1"/>
</dbReference>
<dbReference type="CDD" id="cd16320">
    <property type="entry name" value="MraZ_N"/>
    <property type="match status" value="1"/>
</dbReference>
<dbReference type="Gene3D" id="3.40.1550.20">
    <property type="entry name" value="Transcriptional regulator MraZ domain"/>
    <property type="match status" value="1"/>
</dbReference>
<dbReference type="HAMAP" id="MF_01008">
    <property type="entry name" value="MraZ"/>
    <property type="match status" value="1"/>
</dbReference>
<dbReference type="InterPro" id="IPR003444">
    <property type="entry name" value="MraZ"/>
</dbReference>
<dbReference type="InterPro" id="IPR035644">
    <property type="entry name" value="MraZ_C"/>
</dbReference>
<dbReference type="InterPro" id="IPR020603">
    <property type="entry name" value="MraZ_dom"/>
</dbReference>
<dbReference type="InterPro" id="IPR035642">
    <property type="entry name" value="MraZ_N"/>
</dbReference>
<dbReference type="InterPro" id="IPR038619">
    <property type="entry name" value="MraZ_sf"/>
</dbReference>
<dbReference type="InterPro" id="IPR007159">
    <property type="entry name" value="SpoVT-AbrB_dom"/>
</dbReference>
<dbReference type="InterPro" id="IPR037914">
    <property type="entry name" value="SpoVT-AbrB_sf"/>
</dbReference>
<dbReference type="NCBIfam" id="TIGR00242">
    <property type="entry name" value="division/cell wall cluster transcriptional repressor MraZ"/>
    <property type="match status" value="1"/>
</dbReference>
<dbReference type="PANTHER" id="PTHR34701">
    <property type="entry name" value="TRANSCRIPTIONAL REGULATOR MRAZ"/>
    <property type="match status" value="1"/>
</dbReference>
<dbReference type="PANTHER" id="PTHR34701:SF1">
    <property type="entry name" value="TRANSCRIPTIONAL REGULATOR MRAZ"/>
    <property type="match status" value="1"/>
</dbReference>
<dbReference type="Pfam" id="PF02381">
    <property type="entry name" value="MraZ"/>
    <property type="match status" value="2"/>
</dbReference>
<dbReference type="SUPFAM" id="SSF89447">
    <property type="entry name" value="AbrB/MazE/MraZ-like"/>
    <property type="match status" value="1"/>
</dbReference>
<dbReference type="PROSITE" id="PS51740">
    <property type="entry name" value="SPOVT_ABRB"/>
    <property type="match status" value="2"/>
</dbReference>